<feature type="chain" id="PRO_1000095345" description="Arginine--tRNA ligase">
    <location>
        <begin position="1"/>
        <end position="596"/>
    </location>
</feature>
<feature type="short sequence motif" description="'HIGH' region">
    <location>
        <begin position="139"/>
        <end position="149"/>
    </location>
</feature>
<sequence>MLPAHKLTLETLLAETVKQVATASQGASEAAFVSPAITLERPKVAAHGDVACNVAMQLAKPLRANPRQLAQQIVDALLAQPQAKGLVEAAEVAGPGFINLRLAAAAKQAVIAAVFAEKEAFGRSQRDAGKHVLIEFVSANPTGPLHVGHGRQAALGDALSNVLASQGYDVHREFYYNDAGVQIQTLALSTQARARGLAPGDAGWPASAYNGEYIAEIARDYLNGVTVAASDGEPVTGARDVEDLEAIRRFAVAYLRREQDMDLQAFGVKFDQYYLESSLYKEGRVEKTVEALIAAGKTYEQEGALWLRTTDDGDDKDRVMRKTDGTYTYFVPDVAYHVAKWERGFTKVINVQGSDHHGTIARVRAGLQGLGVGIPKGYPDYILHKMVTVMRNGEEVKISKRAGSYVTVRDLIEWSGGATPGSEAAVDLIDEETIRRGRDAVRFFLISRKADTEFVFDIDLALKQNDENPVHYVQYAHARICSVIAECKARYSTDESTLADVDVSPLTSERAMALLNKLAEFPDMLQHAADELAPHAVAFYLRDLAGEFHSFYNDRTERVLVDDAAERNARVALLAATRQVLANGLATIGVSAPVKM</sequence>
<dbReference type="EC" id="6.1.1.19" evidence="1"/>
<dbReference type="EMBL" id="CP001052">
    <property type="protein sequence ID" value="ACD14898.1"/>
    <property type="molecule type" value="Genomic_DNA"/>
</dbReference>
<dbReference type="RefSeq" id="WP_012431541.1">
    <property type="nucleotide sequence ID" value="NC_010681.1"/>
</dbReference>
<dbReference type="SMR" id="B2SWV4"/>
<dbReference type="STRING" id="398527.Bphyt_0473"/>
<dbReference type="KEGG" id="bpy:Bphyt_0473"/>
<dbReference type="eggNOG" id="COG0018">
    <property type="taxonomic scope" value="Bacteria"/>
</dbReference>
<dbReference type="HOGENOM" id="CLU_006406_0_1_4"/>
<dbReference type="OrthoDB" id="9803211at2"/>
<dbReference type="Proteomes" id="UP000001739">
    <property type="component" value="Chromosome 1"/>
</dbReference>
<dbReference type="GO" id="GO:0005737">
    <property type="term" value="C:cytoplasm"/>
    <property type="evidence" value="ECO:0007669"/>
    <property type="project" value="UniProtKB-SubCell"/>
</dbReference>
<dbReference type="GO" id="GO:0004814">
    <property type="term" value="F:arginine-tRNA ligase activity"/>
    <property type="evidence" value="ECO:0007669"/>
    <property type="project" value="UniProtKB-UniRule"/>
</dbReference>
<dbReference type="GO" id="GO:0005524">
    <property type="term" value="F:ATP binding"/>
    <property type="evidence" value="ECO:0007669"/>
    <property type="project" value="UniProtKB-UniRule"/>
</dbReference>
<dbReference type="GO" id="GO:0006420">
    <property type="term" value="P:arginyl-tRNA aminoacylation"/>
    <property type="evidence" value="ECO:0007669"/>
    <property type="project" value="UniProtKB-UniRule"/>
</dbReference>
<dbReference type="CDD" id="cd00671">
    <property type="entry name" value="ArgRS_core"/>
    <property type="match status" value="1"/>
</dbReference>
<dbReference type="FunFam" id="1.10.730.10:FF:000008">
    <property type="entry name" value="Arginine--tRNA ligase"/>
    <property type="match status" value="1"/>
</dbReference>
<dbReference type="FunFam" id="3.40.50.620:FF:000062">
    <property type="entry name" value="Arginine--tRNA ligase"/>
    <property type="match status" value="1"/>
</dbReference>
<dbReference type="Gene3D" id="3.30.1360.70">
    <property type="entry name" value="Arginyl tRNA synthetase N-terminal domain"/>
    <property type="match status" value="1"/>
</dbReference>
<dbReference type="Gene3D" id="3.40.50.620">
    <property type="entry name" value="HUPs"/>
    <property type="match status" value="1"/>
</dbReference>
<dbReference type="Gene3D" id="1.10.730.10">
    <property type="entry name" value="Isoleucyl-tRNA Synthetase, Domain 1"/>
    <property type="match status" value="1"/>
</dbReference>
<dbReference type="HAMAP" id="MF_00123">
    <property type="entry name" value="Arg_tRNA_synth"/>
    <property type="match status" value="1"/>
</dbReference>
<dbReference type="InterPro" id="IPR001412">
    <property type="entry name" value="aa-tRNA-synth_I_CS"/>
</dbReference>
<dbReference type="InterPro" id="IPR001278">
    <property type="entry name" value="Arg-tRNA-ligase"/>
</dbReference>
<dbReference type="InterPro" id="IPR005148">
    <property type="entry name" value="Arg-tRNA-synth_N"/>
</dbReference>
<dbReference type="InterPro" id="IPR036695">
    <property type="entry name" value="Arg-tRNA-synth_N_sf"/>
</dbReference>
<dbReference type="InterPro" id="IPR035684">
    <property type="entry name" value="ArgRS_core"/>
</dbReference>
<dbReference type="InterPro" id="IPR008909">
    <property type="entry name" value="DALR_anticod-bd"/>
</dbReference>
<dbReference type="InterPro" id="IPR014729">
    <property type="entry name" value="Rossmann-like_a/b/a_fold"/>
</dbReference>
<dbReference type="InterPro" id="IPR009080">
    <property type="entry name" value="tRNAsynth_Ia_anticodon-bd"/>
</dbReference>
<dbReference type="NCBIfam" id="TIGR00456">
    <property type="entry name" value="argS"/>
    <property type="match status" value="1"/>
</dbReference>
<dbReference type="PANTHER" id="PTHR11956:SF5">
    <property type="entry name" value="ARGININE--TRNA LIGASE, CYTOPLASMIC"/>
    <property type="match status" value="1"/>
</dbReference>
<dbReference type="PANTHER" id="PTHR11956">
    <property type="entry name" value="ARGINYL-TRNA SYNTHETASE"/>
    <property type="match status" value="1"/>
</dbReference>
<dbReference type="Pfam" id="PF03485">
    <property type="entry name" value="Arg_tRNA_synt_N"/>
    <property type="match status" value="1"/>
</dbReference>
<dbReference type="Pfam" id="PF05746">
    <property type="entry name" value="DALR_1"/>
    <property type="match status" value="1"/>
</dbReference>
<dbReference type="Pfam" id="PF00750">
    <property type="entry name" value="tRNA-synt_1d"/>
    <property type="match status" value="1"/>
</dbReference>
<dbReference type="PRINTS" id="PR01038">
    <property type="entry name" value="TRNASYNTHARG"/>
</dbReference>
<dbReference type="SMART" id="SM01016">
    <property type="entry name" value="Arg_tRNA_synt_N"/>
    <property type="match status" value="1"/>
</dbReference>
<dbReference type="SMART" id="SM00836">
    <property type="entry name" value="DALR_1"/>
    <property type="match status" value="1"/>
</dbReference>
<dbReference type="SUPFAM" id="SSF47323">
    <property type="entry name" value="Anticodon-binding domain of a subclass of class I aminoacyl-tRNA synthetases"/>
    <property type="match status" value="1"/>
</dbReference>
<dbReference type="SUPFAM" id="SSF55190">
    <property type="entry name" value="Arginyl-tRNA synthetase (ArgRS), N-terminal 'additional' domain"/>
    <property type="match status" value="1"/>
</dbReference>
<dbReference type="SUPFAM" id="SSF52374">
    <property type="entry name" value="Nucleotidylyl transferase"/>
    <property type="match status" value="1"/>
</dbReference>
<dbReference type="PROSITE" id="PS00178">
    <property type="entry name" value="AA_TRNA_LIGASE_I"/>
    <property type="match status" value="1"/>
</dbReference>
<proteinExistence type="inferred from homology"/>
<organism>
    <name type="scientific">Paraburkholderia phytofirmans (strain DSM 17436 / LMG 22146 / PsJN)</name>
    <name type="common">Burkholderia phytofirmans</name>
    <dbReference type="NCBI Taxonomy" id="398527"/>
    <lineage>
        <taxon>Bacteria</taxon>
        <taxon>Pseudomonadati</taxon>
        <taxon>Pseudomonadota</taxon>
        <taxon>Betaproteobacteria</taxon>
        <taxon>Burkholderiales</taxon>
        <taxon>Burkholderiaceae</taxon>
        <taxon>Paraburkholderia</taxon>
    </lineage>
</organism>
<keyword id="KW-0030">Aminoacyl-tRNA synthetase</keyword>
<keyword id="KW-0067">ATP-binding</keyword>
<keyword id="KW-0963">Cytoplasm</keyword>
<keyword id="KW-0436">Ligase</keyword>
<keyword id="KW-0547">Nucleotide-binding</keyword>
<keyword id="KW-0648">Protein biosynthesis</keyword>
<reference key="1">
    <citation type="journal article" date="2011" name="J. Bacteriol.">
        <title>Complete genome sequence of the plant growth-promoting endophyte Burkholderia phytofirmans strain PsJN.</title>
        <authorList>
            <person name="Weilharter A."/>
            <person name="Mitter B."/>
            <person name="Shin M.V."/>
            <person name="Chain P.S."/>
            <person name="Nowak J."/>
            <person name="Sessitsch A."/>
        </authorList>
    </citation>
    <scope>NUCLEOTIDE SEQUENCE [LARGE SCALE GENOMIC DNA]</scope>
    <source>
        <strain>DSM 17436 / LMG 22146 / PsJN</strain>
    </source>
</reference>
<comment type="catalytic activity">
    <reaction evidence="1">
        <text>tRNA(Arg) + L-arginine + ATP = L-arginyl-tRNA(Arg) + AMP + diphosphate</text>
        <dbReference type="Rhea" id="RHEA:20301"/>
        <dbReference type="Rhea" id="RHEA-COMP:9658"/>
        <dbReference type="Rhea" id="RHEA-COMP:9673"/>
        <dbReference type="ChEBI" id="CHEBI:30616"/>
        <dbReference type="ChEBI" id="CHEBI:32682"/>
        <dbReference type="ChEBI" id="CHEBI:33019"/>
        <dbReference type="ChEBI" id="CHEBI:78442"/>
        <dbReference type="ChEBI" id="CHEBI:78513"/>
        <dbReference type="ChEBI" id="CHEBI:456215"/>
        <dbReference type="EC" id="6.1.1.19"/>
    </reaction>
</comment>
<comment type="subunit">
    <text evidence="1">Monomer.</text>
</comment>
<comment type="subcellular location">
    <subcellularLocation>
        <location evidence="1">Cytoplasm</location>
    </subcellularLocation>
</comment>
<comment type="similarity">
    <text evidence="1">Belongs to the class-I aminoacyl-tRNA synthetase family.</text>
</comment>
<evidence type="ECO:0000255" key="1">
    <source>
        <dbReference type="HAMAP-Rule" id="MF_00123"/>
    </source>
</evidence>
<gene>
    <name evidence="1" type="primary">argS</name>
    <name type="ordered locus">Bphyt_0473</name>
</gene>
<protein>
    <recommendedName>
        <fullName evidence="1">Arginine--tRNA ligase</fullName>
        <ecNumber evidence="1">6.1.1.19</ecNumber>
    </recommendedName>
    <alternativeName>
        <fullName evidence="1">Arginyl-tRNA synthetase</fullName>
        <shortName evidence="1">ArgRS</shortName>
    </alternativeName>
</protein>
<name>SYR_PARPJ</name>
<accession>B2SWV4</accession>